<proteinExistence type="inferred from homology"/>
<dbReference type="EMBL" id="CP017623">
    <property type="protein sequence ID" value="AOW26275.1"/>
    <property type="molecule type" value="Genomic_DNA"/>
</dbReference>
<dbReference type="RefSeq" id="XP_718457.1">
    <property type="nucleotide sequence ID" value="XM_713364.1"/>
</dbReference>
<dbReference type="SMR" id="Q5AA50"/>
<dbReference type="FunCoup" id="Q5AA50">
    <property type="interactions" value="989"/>
</dbReference>
<dbReference type="STRING" id="237561.Q5AA50"/>
<dbReference type="EnsemblFungi" id="C1_06110C_A-T">
    <property type="protein sequence ID" value="C1_06110C_A-T-p1"/>
    <property type="gene ID" value="C1_06110C_A"/>
</dbReference>
<dbReference type="GeneID" id="3639820"/>
<dbReference type="KEGG" id="cal:CAALFM_C106110CA"/>
<dbReference type="CGD" id="CAL0000200595">
    <property type="gene designation" value="NPL4"/>
</dbReference>
<dbReference type="VEuPathDB" id="FungiDB:C1_06110C_A"/>
<dbReference type="eggNOG" id="KOG2834">
    <property type="taxonomic scope" value="Eukaryota"/>
</dbReference>
<dbReference type="HOGENOM" id="CLU_017172_0_0_1"/>
<dbReference type="InParanoid" id="Q5AA50"/>
<dbReference type="OrthoDB" id="10251089at2759"/>
<dbReference type="PRO" id="PR:Q5AA50"/>
<dbReference type="Proteomes" id="UP000000559">
    <property type="component" value="Chromosome 1"/>
</dbReference>
<dbReference type="GO" id="GO:0036266">
    <property type="term" value="C:Cdc48p-Npl4p-Vms1p AAA ATPase complex"/>
    <property type="evidence" value="ECO:0007669"/>
    <property type="project" value="EnsemblFungi"/>
</dbReference>
<dbReference type="GO" id="GO:0000837">
    <property type="term" value="C:Doa10p ubiquitin ligase complex"/>
    <property type="evidence" value="ECO:0007669"/>
    <property type="project" value="EnsemblFungi"/>
</dbReference>
<dbReference type="GO" id="GO:0000839">
    <property type="term" value="C:Hrd1p ubiquitin ligase ERAD-L complex"/>
    <property type="evidence" value="ECO:0007669"/>
    <property type="project" value="EnsemblFungi"/>
</dbReference>
<dbReference type="GO" id="GO:0031965">
    <property type="term" value="C:nuclear membrane"/>
    <property type="evidence" value="ECO:0007669"/>
    <property type="project" value="UniProtKB-SubCell"/>
</dbReference>
<dbReference type="GO" id="GO:0005634">
    <property type="term" value="C:nucleus"/>
    <property type="evidence" value="ECO:0000318"/>
    <property type="project" value="GO_Central"/>
</dbReference>
<dbReference type="GO" id="GO:0048471">
    <property type="term" value="C:perinuclear region of cytoplasm"/>
    <property type="evidence" value="ECO:0007669"/>
    <property type="project" value="UniProtKB-SubCell"/>
</dbReference>
<dbReference type="GO" id="GO:0030894">
    <property type="term" value="C:replisome"/>
    <property type="evidence" value="ECO:0007669"/>
    <property type="project" value="EnsemblFungi"/>
</dbReference>
<dbReference type="GO" id="GO:1990112">
    <property type="term" value="C:RQC complex"/>
    <property type="evidence" value="ECO:0007669"/>
    <property type="project" value="EnsemblFungi"/>
</dbReference>
<dbReference type="GO" id="GO:0034098">
    <property type="term" value="C:VCP-NPL4-UFD1 AAA ATPase complex"/>
    <property type="evidence" value="ECO:0007669"/>
    <property type="project" value="EnsemblFungi"/>
</dbReference>
<dbReference type="GO" id="GO:0036435">
    <property type="term" value="F:K48-linked polyubiquitin modification-dependent protein binding"/>
    <property type="evidence" value="ECO:0007669"/>
    <property type="project" value="EnsemblFungi"/>
</dbReference>
<dbReference type="GO" id="GO:0043130">
    <property type="term" value="F:ubiquitin binding"/>
    <property type="evidence" value="ECO:0000318"/>
    <property type="project" value="GO_Central"/>
</dbReference>
<dbReference type="GO" id="GO:0031625">
    <property type="term" value="F:ubiquitin protein ligase binding"/>
    <property type="evidence" value="ECO:0000318"/>
    <property type="project" value="GO_Central"/>
</dbReference>
<dbReference type="GO" id="GO:0071629">
    <property type="term" value="P:cytoplasm protein quality control by the ubiquitin-proteasome system"/>
    <property type="evidence" value="ECO:0007669"/>
    <property type="project" value="EnsemblFungi"/>
</dbReference>
<dbReference type="GO" id="GO:0006274">
    <property type="term" value="P:DNA replication termination"/>
    <property type="evidence" value="ECO:0007669"/>
    <property type="project" value="EnsemblFungi"/>
</dbReference>
<dbReference type="GO" id="GO:0099638">
    <property type="term" value="P:endosome to plasma membrane protein transport"/>
    <property type="evidence" value="ECO:0007669"/>
    <property type="project" value="EnsemblFungi"/>
</dbReference>
<dbReference type="GO" id="GO:0072671">
    <property type="term" value="P:mitochondria-associated ubiquitin-dependent protein catabolic process"/>
    <property type="evidence" value="ECO:0007669"/>
    <property type="project" value="EnsemblFungi"/>
</dbReference>
<dbReference type="GO" id="GO:0051228">
    <property type="term" value="P:mitotic spindle disassembly"/>
    <property type="evidence" value="ECO:0007669"/>
    <property type="project" value="EnsemblFungi"/>
</dbReference>
<dbReference type="GO" id="GO:0051028">
    <property type="term" value="P:mRNA transport"/>
    <property type="evidence" value="ECO:0007669"/>
    <property type="project" value="UniProtKB-KW"/>
</dbReference>
<dbReference type="GO" id="GO:0070651">
    <property type="term" value="P:nonfunctional rRNA decay"/>
    <property type="evidence" value="ECO:0007669"/>
    <property type="project" value="EnsemblFungi"/>
</dbReference>
<dbReference type="GO" id="GO:1900182">
    <property type="term" value="P:positive regulation of protein localization to nucleus"/>
    <property type="evidence" value="ECO:0007669"/>
    <property type="project" value="EnsemblFungi"/>
</dbReference>
<dbReference type="GO" id="GO:0072665">
    <property type="term" value="P:protein localization to vacuole"/>
    <property type="evidence" value="ECO:0007669"/>
    <property type="project" value="EnsemblFungi"/>
</dbReference>
<dbReference type="GO" id="GO:0030970">
    <property type="term" value="P:retrograde protein transport, ER to cytosol"/>
    <property type="evidence" value="ECO:0007669"/>
    <property type="project" value="EnsemblFungi"/>
</dbReference>
<dbReference type="GO" id="GO:1990116">
    <property type="term" value="P:ribosome-associated ubiquitin-dependent protein catabolic process"/>
    <property type="evidence" value="ECO:0007669"/>
    <property type="project" value="EnsemblFungi"/>
</dbReference>
<dbReference type="GO" id="GO:0006511">
    <property type="term" value="P:ubiquitin-dependent protein catabolic process"/>
    <property type="evidence" value="ECO:0000318"/>
    <property type="project" value="GO_Central"/>
</dbReference>
<dbReference type="CDD" id="cd08061">
    <property type="entry name" value="MPN_NPL4"/>
    <property type="match status" value="1"/>
</dbReference>
<dbReference type="Gene3D" id="3.10.20.90">
    <property type="entry name" value="Phosphatidylinositol 3-kinase Catalytic Subunit, Chain A, domain 1"/>
    <property type="match status" value="1"/>
</dbReference>
<dbReference type="InterPro" id="IPR037518">
    <property type="entry name" value="MPN"/>
</dbReference>
<dbReference type="InterPro" id="IPR016563">
    <property type="entry name" value="Npl4"/>
</dbReference>
<dbReference type="InterPro" id="IPR007717">
    <property type="entry name" value="NPL4_C"/>
</dbReference>
<dbReference type="InterPro" id="IPR007716">
    <property type="entry name" value="NPL4_Zn-bd_put"/>
</dbReference>
<dbReference type="InterPro" id="IPR029071">
    <property type="entry name" value="Ubiquitin-like_domsf"/>
</dbReference>
<dbReference type="PANTHER" id="PTHR12710">
    <property type="entry name" value="NUCLEAR PROTEIN LOCALIZATION 4"/>
    <property type="match status" value="1"/>
</dbReference>
<dbReference type="PANTHER" id="PTHR12710:SF0">
    <property type="entry name" value="NUCLEAR PROTEIN LOCALIZATION PROTEIN 4 HOMOLOG"/>
    <property type="match status" value="1"/>
</dbReference>
<dbReference type="Pfam" id="PF05021">
    <property type="entry name" value="NPL4"/>
    <property type="match status" value="1"/>
</dbReference>
<dbReference type="Pfam" id="PF05020">
    <property type="entry name" value="zf-NPL4"/>
    <property type="match status" value="1"/>
</dbReference>
<dbReference type="PIRSF" id="PIRSF010052">
    <property type="entry name" value="Polyub_prc_Npl4"/>
    <property type="match status" value="1"/>
</dbReference>
<dbReference type="SUPFAM" id="SSF54236">
    <property type="entry name" value="Ubiquitin-like"/>
    <property type="match status" value="1"/>
</dbReference>
<dbReference type="PROSITE" id="PS50249">
    <property type="entry name" value="MPN"/>
    <property type="match status" value="1"/>
</dbReference>
<reference key="1">
    <citation type="journal article" date="2004" name="Proc. Natl. Acad. Sci. U.S.A.">
        <title>The diploid genome sequence of Candida albicans.</title>
        <authorList>
            <person name="Jones T."/>
            <person name="Federspiel N.A."/>
            <person name="Chibana H."/>
            <person name="Dungan J."/>
            <person name="Kalman S."/>
            <person name="Magee B.B."/>
            <person name="Newport G."/>
            <person name="Thorstenson Y.R."/>
            <person name="Agabian N."/>
            <person name="Magee P.T."/>
            <person name="Davis R.W."/>
            <person name="Scherer S."/>
        </authorList>
    </citation>
    <scope>NUCLEOTIDE SEQUENCE [LARGE SCALE GENOMIC DNA]</scope>
    <source>
        <strain>SC5314 / ATCC MYA-2876</strain>
    </source>
</reference>
<reference key="2">
    <citation type="journal article" date="2007" name="Genome Biol.">
        <title>Assembly of the Candida albicans genome into sixteen supercontigs aligned on the eight chromosomes.</title>
        <authorList>
            <person name="van het Hoog M."/>
            <person name="Rast T.J."/>
            <person name="Martchenko M."/>
            <person name="Grindle S."/>
            <person name="Dignard D."/>
            <person name="Hogues H."/>
            <person name="Cuomo C."/>
            <person name="Berriman M."/>
            <person name="Scherer S."/>
            <person name="Magee B.B."/>
            <person name="Whiteway M."/>
            <person name="Chibana H."/>
            <person name="Nantel A."/>
            <person name="Magee P.T."/>
        </authorList>
    </citation>
    <scope>GENOME REANNOTATION</scope>
    <source>
        <strain>SC5314 / ATCC MYA-2876</strain>
    </source>
</reference>
<reference key="3">
    <citation type="journal article" date="2013" name="Genome Biol.">
        <title>Assembly of a phased diploid Candida albicans genome facilitates allele-specific measurements and provides a simple model for repeat and indel structure.</title>
        <authorList>
            <person name="Muzzey D."/>
            <person name="Schwartz K."/>
            <person name="Weissman J.S."/>
            <person name="Sherlock G."/>
        </authorList>
    </citation>
    <scope>NUCLEOTIDE SEQUENCE [LARGE SCALE GENOMIC DNA]</scope>
    <scope>GENOME REANNOTATION</scope>
    <source>
        <strain>SC5314 / ATCC MYA-2876</strain>
    </source>
</reference>
<name>NPL4_CANAL</name>
<sequence length="598" mass="67354">MSSIILRFRSKDGMFRITTDSSSNFTLVLEQLIEKLSQSGNNGNGNGNNNKIDLQSLTIANKPQDKGKSSYEFQNQTVNELGLKNGDMLYVNYESVTNDSGPTTTATNTTTNTASGNTIPITGPVPSIPINSVVTSHGPLKVEELPIDQELDKEDGLITRPLSSMCRHGPKGMCEYCSPLPPWDENYRKDHAIKHISFHAYLKQQLEKLKSSGGSYFPPLDPVDYSIDLTCNQGHKPYPNGICSKCQPSPITLQLQKFRMVDHLEFADSFILNDFINVWRVSGVQRFGYLYGRYAKSEKTPLGIKAIVETIIEPPQHDELDGITLLDWDQQEEKMVDQVANKFGLYKVGIIFTDLTDAGTKNGKVLCKRHKDSYFLTNLEIIMAAKFQLKYPNISKYSTAKNNGQFSSKFVTCVISGGLNGEIEPRSYQVSTSAEALVKADIITGCTQPSQIYVNESNNHRYVPDIQYSKINKYGLEVKSNAKPTFPGEFLLVSLTDSFPLQPTPIFTNSYVIENREFLGDENHDIQSLKTLHNYLKSNNDQIFNFHFILHLIKTHILNDQEIDLLIEYIKSKNLEDYLKLVESNGWMTLMTILEQSV</sequence>
<feature type="chain" id="PRO_0000339439" description="Nuclear protein localization protein 4">
    <location>
        <begin position="1"/>
        <end position="598"/>
    </location>
</feature>
<feature type="domain" description="MPN" evidence="2">
    <location>
        <begin position="264"/>
        <end position="403"/>
    </location>
</feature>
<feature type="region of interest" description="Disordered" evidence="3">
    <location>
        <begin position="99"/>
        <end position="119"/>
    </location>
</feature>
<feature type="compositionally biased region" description="Low complexity" evidence="3">
    <location>
        <begin position="99"/>
        <end position="118"/>
    </location>
</feature>
<evidence type="ECO:0000250" key="1"/>
<evidence type="ECO:0000255" key="2">
    <source>
        <dbReference type="PROSITE-ProRule" id="PRU01182"/>
    </source>
</evidence>
<evidence type="ECO:0000256" key="3">
    <source>
        <dbReference type="SAM" id="MobiDB-lite"/>
    </source>
</evidence>
<evidence type="ECO:0000305" key="4"/>
<protein>
    <recommendedName>
        <fullName>Nuclear protein localization protein 4</fullName>
    </recommendedName>
</protein>
<organism>
    <name type="scientific">Candida albicans (strain SC5314 / ATCC MYA-2876)</name>
    <name type="common">Yeast</name>
    <dbReference type="NCBI Taxonomy" id="237561"/>
    <lineage>
        <taxon>Eukaryota</taxon>
        <taxon>Fungi</taxon>
        <taxon>Dikarya</taxon>
        <taxon>Ascomycota</taxon>
        <taxon>Saccharomycotina</taxon>
        <taxon>Pichiomycetes</taxon>
        <taxon>Debaryomycetaceae</taxon>
        <taxon>Candida/Lodderomyces clade</taxon>
        <taxon>Candida</taxon>
    </lineage>
</organism>
<keyword id="KW-0963">Cytoplasm</keyword>
<keyword id="KW-0256">Endoplasmic reticulum</keyword>
<keyword id="KW-0472">Membrane</keyword>
<keyword id="KW-0509">mRNA transport</keyword>
<keyword id="KW-0539">Nucleus</keyword>
<keyword id="KW-0653">Protein transport</keyword>
<keyword id="KW-1185">Reference proteome</keyword>
<keyword id="KW-0811">Translocation</keyword>
<keyword id="KW-0813">Transport</keyword>
<comment type="function">
    <text evidence="1">Involved in the import of nuclear-targeted proteins into the nucleus and the export of poly(A) RNA out of the nucleus. Has a role in the endoplasmic reticulum-associated degradation (ERAD) pathway (By similarity).</text>
</comment>
<comment type="subcellular location">
    <subcellularLocation>
        <location evidence="1">Cytoplasm</location>
        <location evidence="1">Perinuclear region</location>
    </subcellularLocation>
    <subcellularLocation>
        <location evidence="1">Endoplasmic reticulum membrane</location>
        <topology evidence="1">Peripheral membrane protein</topology>
        <orientation evidence="1">Cytoplasmic side</orientation>
    </subcellularLocation>
    <subcellularLocation>
        <location evidence="1">Nucleus membrane</location>
        <topology evidence="1">Peripheral membrane protein</topology>
        <orientation evidence="1">Cytoplasmic side</orientation>
    </subcellularLocation>
    <text evidence="1">Localizes mainly at the nuclear periphery and the endoplasmic reticulum membrane.</text>
</comment>
<comment type="similarity">
    <text evidence="4">Belongs to the NPL4 family.</text>
</comment>
<accession>Q5AA50</accession>
<accession>A0A1D8PDQ6</accession>
<accession>Q5AAD8</accession>
<gene>
    <name type="primary">NPL4</name>
    <name type="ordered locus">CAALFM_C106110CA</name>
    <name type="ORF">CaO19.2434</name>
    <name type="ORF">CaO19.9970</name>
</gene>